<dbReference type="EMBL" id="CP000964">
    <property type="protein sequence ID" value="ACI07475.1"/>
    <property type="molecule type" value="Genomic_DNA"/>
</dbReference>
<dbReference type="SMR" id="B5XSN4"/>
<dbReference type="KEGG" id="kpe:KPK_3411"/>
<dbReference type="HOGENOM" id="CLU_098920_0_0_6"/>
<dbReference type="Proteomes" id="UP000001734">
    <property type="component" value="Chromosome"/>
</dbReference>
<dbReference type="GO" id="GO:0005737">
    <property type="term" value="C:cytoplasm"/>
    <property type="evidence" value="ECO:0007669"/>
    <property type="project" value="UniProtKB-SubCell"/>
</dbReference>
<dbReference type="GO" id="GO:0005886">
    <property type="term" value="C:plasma membrane"/>
    <property type="evidence" value="ECO:0007669"/>
    <property type="project" value="UniProtKB-SubCell"/>
</dbReference>
<dbReference type="FunFam" id="1.10.3890.10:FF:000001">
    <property type="entry name" value="High frequency lysogenization protein HflD homolog"/>
    <property type="match status" value="1"/>
</dbReference>
<dbReference type="Gene3D" id="1.10.3890.10">
    <property type="entry name" value="HflD-like"/>
    <property type="match status" value="1"/>
</dbReference>
<dbReference type="HAMAP" id="MF_00695">
    <property type="entry name" value="HflD_protein"/>
    <property type="match status" value="1"/>
</dbReference>
<dbReference type="InterPro" id="IPR007451">
    <property type="entry name" value="HflD"/>
</dbReference>
<dbReference type="InterPro" id="IPR035932">
    <property type="entry name" value="HflD-like_sf"/>
</dbReference>
<dbReference type="NCBIfam" id="NF001245">
    <property type="entry name" value="PRK00218.1-1"/>
    <property type="match status" value="1"/>
</dbReference>
<dbReference type="NCBIfam" id="NF001246">
    <property type="entry name" value="PRK00218.1-2"/>
    <property type="match status" value="1"/>
</dbReference>
<dbReference type="NCBIfam" id="NF001248">
    <property type="entry name" value="PRK00218.1-4"/>
    <property type="match status" value="1"/>
</dbReference>
<dbReference type="NCBIfam" id="NF001249">
    <property type="entry name" value="PRK00218.1-5"/>
    <property type="match status" value="1"/>
</dbReference>
<dbReference type="PANTHER" id="PTHR38100">
    <property type="entry name" value="HIGH FREQUENCY LYSOGENIZATION PROTEIN HFLD"/>
    <property type="match status" value="1"/>
</dbReference>
<dbReference type="PANTHER" id="PTHR38100:SF1">
    <property type="entry name" value="HIGH FREQUENCY LYSOGENIZATION PROTEIN HFLD"/>
    <property type="match status" value="1"/>
</dbReference>
<dbReference type="Pfam" id="PF04356">
    <property type="entry name" value="DUF489"/>
    <property type="match status" value="1"/>
</dbReference>
<dbReference type="SUPFAM" id="SSF101322">
    <property type="entry name" value="YcfC-like"/>
    <property type="match status" value="1"/>
</dbReference>
<keyword id="KW-0997">Cell inner membrane</keyword>
<keyword id="KW-1003">Cell membrane</keyword>
<keyword id="KW-0963">Cytoplasm</keyword>
<keyword id="KW-0472">Membrane</keyword>
<name>HFLD_KLEP3</name>
<reference key="1">
    <citation type="journal article" date="2008" name="PLoS Genet.">
        <title>Complete genome sequence of the N2-fixing broad host range endophyte Klebsiella pneumoniae 342 and virulence predictions verified in mice.</title>
        <authorList>
            <person name="Fouts D.E."/>
            <person name="Tyler H.L."/>
            <person name="DeBoy R.T."/>
            <person name="Daugherty S."/>
            <person name="Ren Q."/>
            <person name="Badger J.H."/>
            <person name="Durkin A.S."/>
            <person name="Huot H."/>
            <person name="Shrivastava S."/>
            <person name="Kothari S."/>
            <person name="Dodson R.J."/>
            <person name="Mohamoud Y."/>
            <person name="Khouri H."/>
            <person name="Roesch L.F.W."/>
            <person name="Krogfelt K.A."/>
            <person name="Struve C."/>
            <person name="Triplett E.W."/>
            <person name="Methe B.A."/>
        </authorList>
    </citation>
    <scope>NUCLEOTIDE SEQUENCE [LARGE SCALE GENOMIC DNA]</scope>
    <source>
        <strain>342</strain>
    </source>
</reference>
<sequence length="213" mass="22936">MAKNYYDITLALAGVCQAARLVQQLAHQGHCDSDALHVSLNSIIDLDPESTLAVFGGSEANLRLGLETLLGVLNTSSRQGLNAELTRYTLSLMVLERKLAASKGAMDTLGNRIAGLHRQLEHFDLQSETLLSAMAGIYVDVISPLGPRIQVTGSPAVLQSPQVQAKVRSALLAGIRAAVLWHQVGGGRLQLMFSRNRLVNQAKQILAHLTPEL</sequence>
<feature type="chain" id="PRO_1000132293" description="High frequency lysogenization protein HflD homolog">
    <location>
        <begin position="1"/>
        <end position="213"/>
    </location>
</feature>
<organism>
    <name type="scientific">Klebsiella pneumoniae (strain 342)</name>
    <dbReference type="NCBI Taxonomy" id="507522"/>
    <lineage>
        <taxon>Bacteria</taxon>
        <taxon>Pseudomonadati</taxon>
        <taxon>Pseudomonadota</taxon>
        <taxon>Gammaproteobacteria</taxon>
        <taxon>Enterobacterales</taxon>
        <taxon>Enterobacteriaceae</taxon>
        <taxon>Klebsiella/Raoultella group</taxon>
        <taxon>Klebsiella</taxon>
        <taxon>Klebsiella pneumoniae complex</taxon>
    </lineage>
</organism>
<accession>B5XSN4</accession>
<proteinExistence type="inferred from homology"/>
<comment type="subcellular location">
    <subcellularLocation>
        <location>Cytoplasm</location>
    </subcellularLocation>
    <subcellularLocation>
        <location evidence="1">Cell inner membrane</location>
        <topology evidence="1">Peripheral membrane protein</topology>
        <orientation evidence="1">Cytoplasmic side</orientation>
    </subcellularLocation>
</comment>
<comment type="similarity">
    <text evidence="1">Belongs to the HflD family.</text>
</comment>
<protein>
    <recommendedName>
        <fullName evidence="1">High frequency lysogenization protein HflD homolog</fullName>
    </recommendedName>
</protein>
<gene>
    <name evidence="1" type="primary">hflD</name>
    <name type="ordered locus">KPK_3411</name>
</gene>
<evidence type="ECO:0000255" key="1">
    <source>
        <dbReference type="HAMAP-Rule" id="MF_00695"/>
    </source>
</evidence>